<dbReference type="EMBL" id="CR547125">
    <property type="status" value="NOT_ANNOTATED_CDS"/>
    <property type="molecule type" value="Genomic_DNA"/>
</dbReference>
<dbReference type="EMBL" id="BC078233">
    <property type="protein sequence ID" value="AAH78233.1"/>
    <property type="molecule type" value="mRNA"/>
</dbReference>
<dbReference type="RefSeq" id="NP_001003560.2">
    <property type="nucleotide sequence ID" value="NM_001003560.2"/>
</dbReference>
<dbReference type="RefSeq" id="XP_068078328.1">
    <property type="nucleotide sequence ID" value="XM_068222227.1"/>
</dbReference>
<dbReference type="FunCoup" id="Q6DC53">
    <property type="interactions" value="2432"/>
</dbReference>
<dbReference type="STRING" id="7955.ENSDARP00000068045"/>
<dbReference type="PaxDb" id="7955-ENSDARP00000068045"/>
<dbReference type="Ensembl" id="ENSDART00000073555">
    <property type="protein sequence ID" value="ENSDARP00000068045"/>
    <property type="gene ID" value="ENSDARG00000051851"/>
</dbReference>
<dbReference type="GeneID" id="445166"/>
<dbReference type="KEGG" id="dre:445166"/>
<dbReference type="AGR" id="ZFIN:ZDB-GENE-040801-79"/>
<dbReference type="CTD" id="348180"/>
<dbReference type="ZFIN" id="ZDB-GENE-040801-79">
    <property type="gene designation" value="ctu2"/>
</dbReference>
<dbReference type="eggNOG" id="KOG2594">
    <property type="taxonomic scope" value="Eukaryota"/>
</dbReference>
<dbReference type="HOGENOM" id="CLU_024534_2_0_1"/>
<dbReference type="InParanoid" id="Q6DC53"/>
<dbReference type="OMA" id="KQRKQMM"/>
<dbReference type="OrthoDB" id="25129at2759"/>
<dbReference type="PhylomeDB" id="Q6DC53"/>
<dbReference type="TreeFam" id="TF313203"/>
<dbReference type="UniPathway" id="UPA00988"/>
<dbReference type="PRO" id="PR:Q6DC53"/>
<dbReference type="Proteomes" id="UP000000437">
    <property type="component" value="Chromosome 7"/>
</dbReference>
<dbReference type="Bgee" id="ENSDARG00000051851">
    <property type="expression patterns" value="Expressed in ovary and 28 other cell types or tissues"/>
</dbReference>
<dbReference type="ExpressionAtlas" id="Q6DC53">
    <property type="expression patterns" value="baseline"/>
</dbReference>
<dbReference type="GO" id="GO:0005829">
    <property type="term" value="C:cytosol"/>
    <property type="evidence" value="ECO:0000250"/>
    <property type="project" value="UniProtKB"/>
</dbReference>
<dbReference type="GO" id="GO:0016779">
    <property type="term" value="F:nucleotidyltransferase activity"/>
    <property type="evidence" value="ECO:0007669"/>
    <property type="project" value="UniProtKB-UniRule"/>
</dbReference>
<dbReference type="GO" id="GO:0016783">
    <property type="term" value="F:sulfurtransferase activity"/>
    <property type="evidence" value="ECO:0000318"/>
    <property type="project" value="GO_Central"/>
</dbReference>
<dbReference type="GO" id="GO:0000049">
    <property type="term" value="F:tRNA binding"/>
    <property type="evidence" value="ECO:0007669"/>
    <property type="project" value="InterPro"/>
</dbReference>
<dbReference type="GO" id="GO:0032447">
    <property type="term" value="P:protein urmylation"/>
    <property type="evidence" value="ECO:0007669"/>
    <property type="project" value="UniProtKB-UniRule"/>
</dbReference>
<dbReference type="GO" id="GO:0034227">
    <property type="term" value="P:tRNA thio-modification"/>
    <property type="evidence" value="ECO:0000250"/>
    <property type="project" value="UniProtKB"/>
</dbReference>
<dbReference type="GO" id="GO:0002143">
    <property type="term" value="P:tRNA wobble position uridine thiolation"/>
    <property type="evidence" value="ECO:0000318"/>
    <property type="project" value="GO_Central"/>
</dbReference>
<dbReference type="GO" id="GO:0002098">
    <property type="term" value="P:tRNA wobble uridine modification"/>
    <property type="evidence" value="ECO:0000250"/>
    <property type="project" value="UniProtKB"/>
</dbReference>
<dbReference type="Gene3D" id="3.40.50.620">
    <property type="entry name" value="HUPs"/>
    <property type="match status" value="1"/>
</dbReference>
<dbReference type="HAMAP" id="MF_03054">
    <property type="entry name" value="CTU2"/>
    <property type="match status" value="1"/>
</dbReference>
<dbReference type="InterPro" id="IPR019407">
    <property type="entry name" value="CTU2"/>
</dbReference>
<dbReference type="InterPro" id="IPR014729">
    <property type="entry name" value="Rossmann-like_a/b/a_fold"/>
</dbReference>
<dbReference type="PANTHER" id="PTHR20882">
    <property type="entry name" value="CYTOPLASMIC TRNA 2-THIOLATION PROTEIN 2"/>
    <property type="match status" value="1"/>
</dbReference>
<dbReference type="PANTHER" id="PTHR20882:SF14">
    <property type="entry name" value="CYTOPLASMIC TRNA 2-THIOLATION PROTEIN 2"/>
    <property type="match status" value="1"/>
</dbReference>
<dbReference type="Pfam" id="PF10288">
    <property type="entry name" value="CTU2"/>
    <property type="match status" value="1"/>
</dbReference>
<dbReference type="SUPFAM" id="SSF52402">
    <property type="entry name" value="Adenine nucleotide alpha hydrolases-like"/>
    <property type="match status" value="1"/>
</dbReference>
<proteinExistence type="evidence at transcript level"/>
<organism>
    <name type="scientific">Danio rerio</name>
    <name type="common">Zebrafish</name>
    <name type="synonym">Brachydanio rerio</name>
    <dbReference type="NCBI Taxonomy" id="7955"/>
    <lineage>
        <taxon>Eukaryota</taxon>
        <taxon>Metazoa</taxon>
        <taxon>Chordata</taxon>
        <taxon>Craniata</taxon>
        <taxon>Vertebrata</taxon>
        <taxon>Euteleostomi</taxon>
        <taxon>Actinopterygii</taxon>
        <taxon>Neopterygii</taxon>
        <taxon>Teleostei</taxon>
        <taxon>Ostariophysi</taxon>
        <taxon>Cypriniformes</taxon>
        <taxon>Danionidae</taxon>
        <taxon>Danioninae</taxon>
        <taxon>Danio</taxon>
    </lineage>
</organism>
<gene>
    <name type="primary">ctu2</name>
    <name type="synonym">ncs2</name>
    <name type="ORF">zgc:101113</name>
</gene>
<keyword id="KW-0963">Cytoplasm</keyword>
<keyword id="KW-1185">Reference proteome</keyword>
<keyword id="KW-0819">tRNA processing</keyword>
<name>CTU2_DANRE</name>
<reference key="1">
    <citation type="journal article" date="2013" name="Nature">
        <title>The zebrafish reference genome sequence and its relationship to the human genome.</title>
        <authorList>
            <person name="Howe K."/>
            <person name="Clark M.D."/>
            <person name="Torroja C.F."/>
            <person name="Torrance J."/>
            <person name="Berthelot C."/>
            <person name="Muffato M."/>
            <person name="Collins J.E."/>
            <person name="Humphray S."/>
            <person name="McLaren K."/>
            <person name="Matthews L."/>
            <person name="McLaren S."/>
            <person name="Sealy I."/>
            <person name="Caccamo M."/>
            <person name="Churcher C."/>
            <person name="Scott C."/>
            <person name="Barrett J.C."/>
            <person name="Koch R."/>
            <person name="Rauch G.J."/>
            <person name="White S."/>
            <person name="Chow W."/>
            <person name="Kilian B."/>
            <person name="Quintais L.T."/>
            <person name="Guerra-Assuncao J.A."/>
            <person name="Zhou Y."/>
            <person name="Gu Y."/>
            <person name="Yen J."/>
            <person name="Vogel J.H."/>
            <person name="Eyre T."/>
            <person name="Redmond S."/>
            <person name="Banerjee R."/>
            <person name="Chi J."/>
            <person name="Fu B."/>
            <person name="Langley E."/>
            <person name="Maguire S.F."/>
            <person name="Laird G.K."/>
            <person name="Lloyd D."/>
            <person name="Kenyon E."/>
            <person name="Donaldson S."/>
            <person name="Sehra H."/>
            <person name="Almeida-King J."/>
            <person name="Loveland J."/>
            <person name="Trevanion S."/>
            <person name="Jones M."/>
            <person name="Quail M."/>
            <person name="Willey D."/>
            <person name="Hunt A."/>
            <person name="Burton J."/>
            <person name="Sims S."/>
            <person name="McLay K."/>
            <person name="Plumb B."/>
            <person name="Davis J."/>
            <person name="Clee C."/>
            <person name="Oliver K."/>
            <person name="Clark R."/>
            <person name="Riddle C."/>
            <person name="Elliot D."/>
            <person name="Threadgold G."/>
            <person name="Harden G."/>
            <person name="Ware D."/>
            <person name="Begum S."/>
            <person name="Mortimore B."/>
            <person name="Kerry G."/>
            <person name="Heath P."/>
            <person name="Phillimore B."/>
            <person name="Tracey A."/>
            <person name="Corby N."/>
            <person name="Dunn M."/>
            <person name="Johnson C."/>
            <person name="Wood J."/>
            <person name="Clark S."/>
            <person name="Pelan S."/>
            <person name="Griffiths G."/>
            <person name="Smith M."/>
            <person name="Glithero R."/>
            <person name="Howden P."/>
            <person name="Barker N."/>
            <person name="Lloyd C."/>
            <person name="Stevens C."/>
            <person name="Harley J."/>
            <person name="Holt K."/>
            <person name="Panagiotidis G."/>
            <person name="Lovell J."/>
            <person name="Beasley H."/>
            <person name="Henderson C."/>
            <person name="Gordon D."/>
            <person name="Auger K."/>
            <person name="Wright D."/>
            <person name="Collins J."/>
            <person name="Raisen C."/>
            <person name="Dyer L."/>
            <person name="Leung K."/>
            <person name="Robertson L."/>
            <person name="Ambridge K."/>
            <person name="Leongamornlert D."/>
            <person name="McGuire S."/>
            <person name="Gilderthorp R."/>
            <person name="Griffiths C."/>
            <person name="Manthravadi D."/>
            <person name="Nichol S."/>
            <person name="Barker G."/>
            <person name="Whitehead S."/>
            <person name="Kay M."/>
            <person name="Brown J."/>
            <person name="Murnane C."/>
            <person name="Gray E."/>
            <person name="Humphries M."/>
            <person name="Sycamore N."/>
            <person name="Barker D."/>
            <person name="Saunders D."/>
            <person name="Wallis J."/>
            <person name="Babbage A."/>
            <person name="Hammond S."/>
            <person name="Mashreghi-Mohammadi M."/>
            <person name="Barr L."/>
            <person name="Martin S."/>
            <person name="Wray P."/>
            <person name="Ellington A."/>
            <person name="Matthews N."/>
            <person name="Ellwood M."/>
            <person name="Woodmansey R."/>
            <person name="Clark G."/>
            <person name="Cooper J."/>
            <person name="Tromans A."/>
            <person name="Grafham D."/>
            <person name="Skuce C."/>
            <person name="Pandian R."/>
            <person name="Andrews R."/>
            <person name="Harrison E."/>
            <person name="Kimberley A."/>
            <person name="Garnett J."/>
            <person name="Fosker N."/>
            <person name="Hall R."/>
            <person name="Garner P."/>
            <person name="Kelly D."/>
            <person name="Bird C."/>
            <person name="Palmer S."/>
            <person name="Gehring I."/>
            <person name="Berger A."/>
            <person name="Dooley C.M."/>
            <person name="Ersan-Urun Z."/>
            <person name="Eser C."/>
            <person name="Geiger H."/>
            <person name="Geisler M."/>
            <person name="Karotki L."/>
            <person name="Kirn A."/>
            <person name="Konantz J."/>
            <person name="Konantz M."/>
            <person name="Oberlander M."/>
            <person name="Rudolph-Geiger S."/>
            <person name="Teucke M."/>
            <person name="Lanz C."/>
            <person name="Raddatz G."/>
            <person name="Osoegawa K."/>
            <person name="Zhu B."/>
            <person name="Rapp A."/>
            <person name="Widaa S."/>
            <person name="Langford C."/>
            <person name="Yang F."/>
            <person name="Schuster S.C."/>
            <person name="Carter N.P."/>
            <person name="Harrow J."/>
            <person name="Ning Z."/>
            <person name="Herrero J."/>
            <person name="Searle S.M."/>
            <person name="Enright A."/>
            <person name="Geisler R."/>
            <person name="Plasterk R.H."/>
            <person name="Lee C."/>
            <person name="Westerfield M."/>
            <person name="de Jong P.J."/>
            <person name="Zon L.I."/>
            <person name="Postlethwait J.H."/>
            <person name="Nusslein-Volhard C."/>
            <person name="Hubbard T.J."/>
            <person name="Roest Crollius H."/>
            <person name="Rogers J."/>
            <person name="Stemple D.L."/>
        </authorList>
    </citation>
    <scope>NUCLEOTIDE SEQUENCE [LARGE SCALE GENOMIC DNA]</scope>
    <source>
        <strain>Tuebingen</strain>
    </source>
</reference>
<reference key="2">
    <citation type="submission" date="2004-07" db="EMBL/GenBank/DDBJ databases">
        <authorList>
            <consortium name="NIH - Zebrafish Gene Collection (ZGC) project"/>
        </authorList>
    </citation>
    <scope>NUCLEOTIDE SEQUENCE [LARGE SCALE MRNA]</scope>
    <source>
        <tissue>Embryo</tissue>
    </source>
</reference>
<evidence type="ECO:0000255" key="1">
    <source>
        <dbReference type="HAMAP-Rule" id="MF_03054"/>
    </source>
</evidence>
<evidence type="ECO:0000305" key="2"/>
<comment type="function">
    <text evidence="1">Plays a central role in 2-thiolation of mcm(5)S(2)U at tRNA wobble positions of tRNA(Lys), tRNA(Glu) and tRNA(Gln). May act by forming a heterodimer with ctu1/atpbd3 that ligates sulfur from thiocarboxylated urm1 onto the uridine of tRNAs at wobble position.</text>
</comment>
<comment type="pathway">
    <text evidence="1">tRNA modification; 5-methoxycarbonylmethyl-2-thiouridine-tRNA biosynthesis.</text>
</comment>
<comment type="subcellular location">
    <subcellularLocation>
        <location evidence="1">Cytoplasm</location>
    </subcellularLocation>
</comment>
<comment type="similarity">
    <text evidence="1">Belongs to the CTU2/NCS2 family.</text>
</comment>
<accession>Q6DC53</accession>
<accession>F1QNK0</accession>
<sequence>MCQVEEDYNGLECNQEKIPVSGLNRKCMKCKEGTAVLIIRVSDAFCRSCFKEYFIHKFRAMLGKNRVIFPQEKVLLAVSGGAASCTMLSQVQEGLSRDAPKKLRFMPGIVYIDDGGACGRSEDERQTSISQLKNIFTQTGFPYFIVPLEKVFSLPTSVLVPGTSDPDPSNPCYKQAVDKYLKEKQKLREEEAVCAVAQLNLEDSAYLPEHKLALQRLFSSLKTLSAKQEMLQTLRQHLILHVARENSYSKVMMGESCSRLAVKLLSNIALGRGAALASDTGFSDPRFGDVVIVRPMRDYSSKEITFYNRMFHVPSVFIPGLDTKSHDKASIQRLTESFVTNLQADFPSTVSTIYRTSEKLHTVRPPQSQSTEPEPASKCLLCLCALDTTADKASAFHATLISEQLSQLRLQEGSVDLVAGSSDQCCVEDQTCGTSGCCSSKRTPVQQDLKTLLCYSCRLTVKDMAAVNTLPPYILTEAEKRQRRSQMKVEISEYLLEEDQD</sequence>
<protein>
    <recommendedName>
        <fullName evidence="1">Cytoplasmic tRNA 2-thiolation protein 2</fullName>
    </recommendedName>
</protein>
<feature type="chain" id="PRO_0000289178" description="Cytoplasmic tRNA 2-thiolation protein 2">
    <location>
        <begin position="1"/>
        <end position="501"/>
    </location>
</feature>
<feature type="sequence conflict" description="In Ref. 1; CR547125." evidence="2" ref="1">
    <original>S</original>
    <variation>F</variation>
    <location>
        <position position="164"/>
    </location>
</feature>